<name>Y418_SHEPC</name>
<feature type="chain" id="PRO_1000044727" description="UPF0761 membrane protein Sputcn32_0418">
    <location>
        <begin position="1"/>
        <end position="294"/>
    </location>
</feature>
<feature type="transmembrane region" description="Helical" evidence="1">
    <location>
        <begin position="45"/>
        <end position="65"/>
    </location>
</feature>
<feature type="transmembrane region" description="Helical" evidence="1">
    <location>
        <begin position="102"/>
        <end position="122"/>
    </location>
</feature>
<feature type="transmembrane region" description="Helical" evidence="1">
    <location>
        <begin position="137"/>
        <end position="157"/>
    </location>
</feature>
<feature type="transmembrane region" description="Helical" evidence="1">
    <location>
        <begin position="179"/>
        <end position="199"/>
    </location>
</feature>
<feature type="transmembrane region" description="Helical" evidence="1">
    <location>
        <begin position="213"/>
        <end position="233"/>
    </location>
</feature>
<feature type="transmembrane region" description="Helical" evidence="1">
    <location>
        <begin position="247"/>
        <end position="267"/>
    </location>
</feature>
<proteinExistence type="inferred from homology"/>
<keyword id="KW-0997">Cell inner membrane</keyword>
<keyword id="KW-1003">Cell membrane</keyword>
<keyword id="KW-0472">Membrane</keyword>
<keyword id="KW-0812">Transmembrane</keyword>
<keyword id="KW-1133">Transmembrane helix</keyword>
<sequence length="294" mass="32621">MTKKIEVAQIRVLFLGIWRFLQHLRLRLVEDQINIRAGHLAYVTLLSLVPLVAVTMSMLSAFPVFKGIRGQIEAFVYENFLPAAGDTVQIYINEFVGNASKGTAVGIAALVVVAIMLISAIDKSLNNIWRTKEKRSVVVAFSMYWMVITLGPVLVGASLVATSYVVSLKLFEDDTFSGVVPLFIERLPMLFSVAAFLLLYMVVPNQKVKFLHALLGALVAALLFELGKKAFALYVTQFPSYEAIYGALATIPILFVWVYLSWMIVLLGAEITAAMPEYLDYESSFDKDEASTKT</sequence>
<reference key="1">
    <citation type="submission" date="2007-04" db="EMBL/GenBank/DDBJ databases">
        <title>Complete sequence of Shewanella putrefaciens CN-32.</title>
        <authorList>
            <consortium name="US DOE Joint Genome Institute"/>
            <person name="Copeland A."/>
            <person name="Lucas S."/>
            <person name="Lapidus A."/>
            <person name="Barry K."/>
            <person name="Detter J.C."/>
            <person name="Glavina del Rio T."/>
            <person name="Hammon N."/>
            <person name="Israni S."/>
            <person name="Dalin E."/>
            <person name="Tice H."/>
            <person name="Pitluck S."/>
            <person name="Chain P."/>
            <person name="Malfatti S."/>
            <person name="Shin M."/>
            <person name="Vergez L."/>
            <person name="Schmutz J."/>
            <person name="Larimer F."/>
            <person name="Land M."/>
            <person name="Hauser L."/>
            <person name="Kyrpides N."/>
            <person name="Mikhailova N."/>
            <person name="Romine M.F."/>
            <person name="Fredrickson J."/>
            <person name="Tiedje J."/>
            <person name="Richardson P."/>
        </authorList>
    </citation>
    <scope>NUCLEOTIDE SEQUENCE [LARGE SCALE GENOMIC DNA]</scope>
    <source>
        <strain>CN-32 / ATCC BAA-453</strain>
    </source>
</reference>
<organism>
    <name type="scientific">Shewanella putrefaciens (strain CN-32 / ATCC BAA-453)</name>
    <dbReference type="NCBI Taxonomy" id="319224"/>
    <lineage>
        <taxon>Bacteria</taxon>
        <taxon>Pseudomonadati</taxon>
        <taxon>Pseudomonadota</taxon>
        <taxon>Gammaproteobacteria</taxon>
        <taxon>Alteromonadales</taxon>
        <taxon>Shewanellaceae</taxon>
        <taxon>Shewanella</taxon>
    </lineage>
</organism>
<evidence type="ECO:0000255" key="1">
    <source>
        <dbReference type="HAMAP-Rule" id="MF_00672"/>
    </source>
</evidence>
<comment type="subcellular location">
    <subcellularLocation>
        <location evidence="1">Cell inner membrane</location>
        <topology evidence="1">Multi-pass membrane protein</topology>
    </subcellularLocation>
</comment>
<comment type="similarity">
    <text evidence="1">Belongs to the UPF0761 family.</text>
</comment>
<dbReference type="EMBL" id="CP000681">
    <property type="protein sequence ID" value="ABP74150.1"/>
    <property type="molecule type" value="Genomic_DNA"/>
</dbReference>
<dbReference type="STRING" id="319224.Sputcn32_0418"/>
<dbReference type="KEGG" id="spc:Sputcn32_0418"/>
<dbReference type="eggNOG" id="COG1295">
    <property type="taxonomic scope" value="Bacteria"/>
</dbReference>
<dbReference type="HOGENOM" id="CLU_032288_0_0_6"/>
<dbReference type="GO" id="GO:0005886">
    <property type="term" value="C:plasma membrane"/>
    <property type="evidence" value="ECO:0007669"/>
    <property type="project" value="UniProtKB-SubCell"/>
</dbReference>
<dbReference type="HAMAP" id="MF_00672">
    <property type="entry name" value="UPF0761"/>
    <property type="match status" value="1"/>
</dbReference>
<dbReference type="InterPro" id="IPR023679">
    <property type="entry name" value="UPF0761_bac"/>
</dbReference>
<dbReference type="InterPro" id="IPR017039">
    <property type="entry name" value="Virul_fac_BrkB"/>
</dbReference>
<dbReference type="NCBIfam" id="NF002457">
    <property type="entry name" value="PRK01637.1"/>
    <property type="match status" value="1"/>
</dbReference>
<dbReference type="NCBIfam" id="TIGR00765">
    <property type="entry name" value="yihY_not_rbn"/>
    <property type="match status" value="1"/>
</dbReference>
<dbReference type="PANTHER" id="PTHR30213">
    <property type="entry name" value="INNER MEMBRANE PROTEIN YHJD"/>
    <property type="match status" value="1"/>
</dbReference>
<dbReference type="PANTHER" id="PTHR30213:SF0">
    <property type="entry name" value="UPF0761 MEMBRANE PROTEIN YIHY"/>
    <property type="match status" value="1"/>
</dbReference>
<dbReference type="Pfam" id="PF03631">
    <property type="entry name" value="Virul_fac_BrkB"/>
    <property type="match status" value="1"/>
</dbReference>
<dbReference type="PIRSF" id="PIRSF035875">
    <property type="entry name" value="RNase_BN"/>
    <property type="match status" value="1"/>
</dbReference>
<protein>
    <recommendedName>
        <fullName evidence="1">UPF0761 membrane protein Sputcn32_0418</fullName>
    </recommendedName>
</protein>
<gene>
    <name type="ordered locus">Sputcn32_0418</name>
</gene>
<accession>A4Y2G7</accession>